<sequence>MFGLGGAPQISSEQKLQAAEAELDMVTGMFNQLVDQCHSKCINKSYGDSDITKQEALCLDRCVAKYFDTNVQVGEHMQKLGQSGQFMGRK</sequence>
<evidence type="ECO:0000250" key="1"/>
<evidence type="ECO:0000269" key="2">
    <source>
    </source>
</evidence>
<evidence type="ECO:0000305" key="3"/>
<keyword id="KW-0143">Chaperone</keyword>
<keyword id="KW-1015">Disulfide bond</keyword>
<keyword id="KW-0472">Membrane</keyword>
<keyword id="KW-0479">Metal-binding</keyword>
<keyword id="KW-0496">Mitochondrion</keyword>
<keyword id="KW-0999">Mitochondrion inner membrane</keyword>
<keyword id="KW-0653">Protein transport</keyword>
<keyword id="KW-1185">Reference proteome</keyword>
<keyword id="KW-0811">Translocation</keyword>
<keyword id="KW-0813">Transport</keyword>
<keyword id="KW-0862">Zinc</keyword>
<name>TIM10_PICSO</name>
<proteinExistence type="inferred from homology"/>
<organism>
    <name type="scientific">Pichia sorbitophila (strain ATCC MYA-4447 / BCRC 22081 / CBS 7064 / NBRC 10061 / NRRL Y-12695)</name>
    <name type="common">Hybrid yeast</name>
    <dbReference type="NCBI Taxonomy" id="559304"/>
    <lineage>
        <taxon>Eukaryota</taxon>
        <taxon>Fungi</taxon>
        <taxon>Dikarya</taxon>
        <taxon>Ascomycota</taxon>
        <taxon>Saccharomycotina</taxon>
        <taxon>Pichiomycetes</taxon>
        <taxon>Debaryomycetaceae</taxon>
        <taxon>Millerozyma</taxon>
    </lineage>
</organism>
<protein>
    <recommendedName>
        <fullName>Mitochondrial import inner membrane translocase subunit Tim10</fullName>
    </recommendedName>
</protein>
<dbReference type="EMBL" id="AJ243940">
    <property type="protein sequence ID" value="CAB82171.1"/>
    <property type="molecule type" value="Genomic_DNA"/>
</dbReference>
<dbReference type="EMBL" id="AJ243940">
    <property type="protein sequence ID" value="CAB82172.1"/>
    <property type="molecule type" value="Genomic_DNA"/>
</dbReference>
<dbReference type="EMBL" id="FO082053">
    <property type="protein sequence ID" value="CCE79998.1"/>
    <property type="molecule type" value="Genomic_DNA"/>
</dbReference>
<dbReference type="EMBL" id="FO082052">
    <property type="protein sequence ID" value="CCE80763.1"/>
    <property type="molecule type" value="Genomic_DNA"/>
</dbReference>
<dbReference type="SMR" id="Q9P335"/>
<dbReference type="STRING" id="559304.Q9P335"/>
<dbReference type="eggNOG" id="KOG3480">
    <property type="taxonomic scope" value="Eukaryota"/>
</dbReference>
<dbReference type="HOGENOM" id="CLU_162151_1_0_1"/>
<dbReference type="InParanoid" id="Q9P335"/>
<dbReference type="OMA" id="QIEMATM"/>
<dbReference type="OrthoDB" id="274922at2759"/>
<dbReference type="Proteomes" id="UP000005222">
    <property type="component" value="Chromosome G"/>
</dbReference>
<dbReference type="Proteomes" id="UP000005222">
    <property type="component" value="Chromosome H"/>
</dbReference>
<dbReference type="GO" id="GO:0005743">
    <property type="term" value="C:mitochondrial inner membrane"/>
    <property type="evidence" value="ECO:0007669"/>
    <property type="project" value="UniProtKB-SubCell"/>
</dbReference>
<dbReference type="GO" id="GO:0046872">
    <property type="term" value="F:metal ion binding"/>
    <property type="evidence" value="ECO:0007669"/>
    <property type="project" value="UniProtKB-KW"/>
</dbReference>
<dbReference type="GO" id="GO:0045039">
    <property type="term" value="P:protein insertion into mitochondrial inner membrane"/>
    <property type="evidence" value="ECO:0007669"/>
    <property type="project" value="TreeGrafter"/>
</dbReference>
<dbReference type="FunFam" id="1.10.287.810:FF:000002">
    <property type="entry name" value="Mitochondrial import inner membrane translocase subunit tim10"/>
    <property type="match status" value="1"/>
</dbReference>
<dbReference type="Gene3D" id="1.10.287.810">
    <property type="entry name" value="Mitochondrial import inner membrane translocase subunit tim13 like domains"/>
    <property type="match status" value="1"/>
</dbReference>
<dbReference type="InterPro" id="IPR004217">
    <property type="entry name" value="Tim10-like"/>
</dbReference>
<dbReference type="InterPro" id="IPR035427">
    <property type="entry name" value="Tim10-like_dom_sf"/>
</dbReference>
<dbReference type="PANTHER" id="PTHR11038">
    <property type="entry name" value="MITOCHONDRIAL IMPORT INNER MEMBRANE TRANSLOCASE SUBUNIT TIM10"/>
    <property type="match status" value="1"/>
</dbReference>
<dbReference type="PANTHER" id="PTHR11038:SF16">
    <property type="entry name" value="MITOCHONDRIAL IMPORT INNER MEMBRANE TRANSLOCASE SUBUNIT TIM10"/>
    <property type="match status" value="1"/>
</dbReference>
<dbReference type="Pfam" id="PF02953">
    <property type="entry name" value="zf-Tim10_DDP"/>
    <property type="match status" value="1"/>
</dbReference>
<dbReference type="SUPFAM" id="SSF144122">
    <property type="entry name" value="Tim10-like"/>
    <property type="match status" value="1"/>
</dbReference>
<reference key="1">
    <citation type="journal article" date="2000" name="Yeast">
        <title>Isolation and characterisation of the putative TIM10 homologue from the yeast Pichia sorbitophila: a putative component of the mitochondrial protein import system.</title>
        <authorList>
            <person name="Kayingo G."/>
            <person name="Potier S."/>
            <person name="Hohmann S."/>
            <person name="Prior B.A."/>
        </authorList>
    </citation>
    <scope>NUCLEOTIDE SEQUENCE [GENOMIC DNA]</scope>
    <scope>SUBCELLULAR LOCATION</scope>
    <source>
        <strain>ATCC MYA-4447 / BCRC 22081 / CBS 7064 / NBRC 10061 / NRRL Y-12695</strain>
    </source>
</reference>
<reference key="2">
    <citation type="journal article" date="2012" name="G3 (Bethesda)">
        <title>Pichia sorbitophila, an interspecies yeast hybrid reveals early steps of genome resolution following polyploidization.</title>
        <authorList>
            <person name="Leh Louis V."/>
            <person name="Despons L."/>
            <person name="Friedrich A."/>
            <person name="Martin T."/>
            <person name="Durrens P."/>
            <person name="Casaregola S."/>
            <person name="Neuveglise C."/>
            <person name="Fairhead C."/>
            <person name="Marck C."/>
            <person name="Cruz J.A."/>
            <person name="Straub M.-L."/>
            <person name="Kugler V."/>
            <person name="Sacerdot C."/>
            <person name="Uzunov Z."/>
            <person name="Thierry A."/>
            <person name="Weiss S."/>
            <person name="Bleykasten C."/>
            <person name="De Montigny J."/>
            <person name="Jacques N."/>
            <person name="Jung P."/>
            <person name="Lemaire M."/>
            <person name="Mallet S."/>
            <person name="Morel G."/>
            <person name="Richard G.-F."/>
            <person name="Sarkar A."/>
            <person name="Savel G."/>
            <person name="Schacherer J."/>
            <person name="Seret M.-L."/>
            <person name="Talla E."/>
            <person name="Samson G."/>
            <person name="Jubin C."/>
            <person name="Poulain J."/>
            <person name="Vacherie B."/>
            <person name="Barbe V."/>
            <person name="Pelletier E."/>
            <person name="Sherman D.J."/>
            <person name="Westhof E."/>
            <person name="Weissenbach J."/>
            <person name="Baret P.V."/>
            <person name="Wincker P."/>
            <person name="Gaillardin C."/>
            <person name="Dujon B."/>
            <person name="Souciet J.-L."/>
        </authorList>
    </citation>
    <scope>NUCLEOTIDE SEQUENCE [LARGE SCALE GENOMIC DNA]</scope>
    <source>
        <strain>ATCC MYA-4447 / BCRC 22081 / CBS 7064 / NBRC 10061 / NRRL Y-12695</strain>
    </source>
</reference>
<comment type="function">
    <text evidence="1">Mitochondrial intermembrane chaperone that participates in the import and insertion of multi-pass transmembrane proteins into the mitochondrial inner membrane. Also required for the transfer of beta-barrel precursors from the TOM complex to the sorting and assembly machinery (SAM complex) of the outer membrane. Acts as a chaperone-like protein that protects the hydrophobic precursors from aggregation and guide them through the mitochondrial intermembrane space (By similarity).</text>
</comment>
<comment type="subunit">
    <text evidence="1">Heterohexamer; composed of 3 copies of TIM9 and 3 copies of TIM10, named soluble 70 kDa complex. Associates directly with the TIM22 complex, whose core is composed of TIM22 and TIM54. Interacts with the transmembrane regions of multi-pass transmembrane proteins in transit (By similarity).</text>
</comment>
<comment type="subcellular location">
    <subcellularLocation>
        <location evidence="2">Mitochondrion inner membrane</location>
        <topology evidence="2">Peripheral membrane protein</topology>
        <orientation evidence="2">Intermembrane side</orientation>
    </subcellularLocation>
</comment>
<comment type="domain">
    <text evidence="1">The twin CX3C motif contains 4 conserved Cys residues that form 2 disulfide bonds in the mitochondrial intermembrane space. However, during the transit of TIM10 from cytoplasm into mitochondrion, the Cys residues probably coordinate zinc, thereby preventing folding and allowing its transfer across mitochondrial outer membrane (By similarity).</text>
</comment>
<comment type="similarity">
    <text evidence="3">Belongs to the small Tim family.</text>
</comment>
<feature type="chain" id="PRO_0000228064" description="Mitochondrial import inner membrane translocase subunit Tim10">
    <location>
        <begin position="1"/>
        <end position="90"/>
    </location>
</feature>
<feature type="short sequence motif" description="Twin CX3C motif">
    <location>
        <begin position="37"/>
        <end position="62"/>
    </location>
</feature>
<feature type="disulfide bond" evidence="1">
    <location>
        <begin position="37"/>
        <end position="62"/>
    </location>
</feature>
<feature type="disulfide bond" evidence="1">
    <location>
        <begin position="41"/>
        <end position="58"/>
    </location>
</feature>
<accession>Q9P335</accession>
<accession>G8YH61</accession>
<gene>
    <name type="primary">TIM10</name>
    <name type="ORF">GNLVRS01_PISO0G04758g</name>
    <name type="ORF">GNLVRS01_PISO0H04759g</name>
    <name type="ORF">Piso0_003094</name>
</gene>